<reference key="1">
    <citation type="journal article" date="2009" name="BMC Genomics">
        <title>Evidence for niche adaptation in the genome of the bovine pathogen Streptococcus uberis.</title>
        <authorList>
            <person name="Ward P.N."/>
            <person name="Holden M.T.G."/>
            <person name="Leigh J.A."/>
            <person name="Lennard N."/>
            <person name="Bignell A."/>
            <person name="Barron A."/>
            <person name="Clark L."/>
            <person name="Quail M.A."/>
            <person name="Woodward J."/>
            <person name="Barrell B.G."/>
            <person name="Egan S.A."/>
            <person name="Field T.R."/>
            <person name="Maskell D."/>
            <person name="Kehoe M."/>
            <person name="Dowson C.G."/>
            <person name="Chanter N."/>
            <person name="Whatmore A.M."/>
            <person name="Bentley S.D."/>
            <person name="Parkhill J."/>
        </authorList>
    </citation>
    <scope>NUCLEOTIDE SEQUENCE [LARGE SCALE GENOMIC DNA]</scope>
    <source>
        <strain>ATCC BAA-854 / 0140J</strain>
    </source>
</reference>
<accession>B9DUB2</accession>
<protein>
    <recommendedName>
        <fullName evidence="1">GMP synthase [glutamine-hydrolyzing]</fullName>
        <ecNumber evidence="1">6.3.5.2</ecNumber>
    </recommendedName>
    <alternativeName>
        <fullName evidence="1">GMP synthetase</fullName>
    </alternativeName>
    <alternativeName>
        <fullName evidence="1">Glutamine amidotransferase</fullName>
    </alternativeName>
</protein>
<sequence length="520" mass="57584">MTEISMLKDVQKIIVLDYGSQYNQLIARRIREFGVFSELKSHKITAQEIREINPIGIVLSGGPNSVYADNAFGIDPEIFELGIPILGICYGMQLITDQLGGKVVPAGQAGNREYGQSTLNIRTASKLFADTPDEQLVLMSHGDAVTEIPDGFHLVGDSNDCPYAAIENSEKHIYGIQFHPEVRHSVYGNDILRNFAIFICGARGDWSMDNFIDMQIEKIRETVGDKKVLLGLSGGVDSSVVGVLLQKAIGDQLTCIFVDHGLLRKDEGDQVMGMLGGKFGLNIIRVDAKDRFLELLAGVDDPEKKRKIIGNEFVYVFDDEASKLKGVDFLAQGTLYTDIIESGTETAQTIKSHHNVGGLPEDMQFQLIEPLNTLFKDEVRELGIALGMPENIVWRQPFPGPGLAIRVMGAITEEKLETVRESDAILREEIAKAGLDRDVWQYFTVNTGVRSVGVMGDGRTYDYTIAIRAITSIDGMTADFAQLPWDVLKKISTRIVNEVDHVNRIVYDITSKPPATVEWE</sequence>
<proteinExistence type="inferred from homology"/>
<gene>
    <name evidence="1" type="primary">guaA</name>
    <name type="ordered locus">SUB0891</name>
</gene>
<name>GUAA_STRU0</name>
<feature type="chain" id="PRO_1000133385" description="GMP synthase [glutamine-hydrolyzing]">
    <location>
        <begin position="1"/>
        <end position="520"/>
    </location>
</feature>
<feature type="domain" description="Glutamine amidotransferase type-1" evidence="1">
    <location>
        <begin position="12"/>
        <end position="205"/>
    </location>
</feature>
<feature type="domain" description="GMPS ATP-PPase" evidence="1">
    <location>
        <begin position="206"/>
        <end position="395"/>
    </location>
</feature>
<feature type="active site" description="Nucleophile" evidence="1">
    <location>
        <position position="89"/>
    </location>
</feature>
<feature type="active site" evidence="1">
    <location>
        <position position="179"/>
    </location>
</feature>
<feature type="active site" evidence="1">
    <location>
        <position position="181"/>
    </location>
</feature>
<feature type="binding site" evidence="1">
    <location>
        <begin position="233"/>
        <end position="239"/>
    </location>
    <ligand>
        <name>ATP</name>
        <dbReference type="ChEBI" id="CHEBI:30616"/>
    </ligand>
</feature>
<organism>
    <name type="scientific">Streptococcus uberis (strain ATCC BAA-854 / 0140J)</name>
    <dbReference type="NCBI Taxonomy" id="218495"/>
    <lineage>
        <taxon>Bacteria</taxon>
        <taxon>Bacillati</taxon>
        <taxon>Bacillota</taxon>
        <taxon>Bacilli</taxon>
        <taxon>Lactobacillales</taxon>
        <taxon>Streptococcaceae</taxon>
        <taxon>Streptococcus</taxon>
    </lineage>
</organism>
<keyword id="KW-0067">ATP-binding</keyword>
<keyword id="KW-0315">Glutamine amidotransferase</keyword>
<keyword id="KW-0332">GMP biosynthesis</keyword>
<keyword id="KW-0436">Ligase</keyword>
<keyword id="KW-0547">Nucleotide-binding</keyword>
<keyword id="KW-0658">Purine biosynthesis</keyword>
<keyword id="KW-1185">Reference proteome</keyword>
<dbReference type="EC" id="6.3.5.2" evidence="1"/>
<dbReference type="EMBL" id="AM946015">
    <property type="protein sequence ID" value="CAR41980.1"/>
    <property type="molecule type" value="Genomic_DNA"/>
</dbReference>
<dbReference type="RefSeq" id="WP_012658392.1">
    <property type="nucleotide sequence ID" value="NC_012004.1"/>
</dbReference>
<dbReference type="SMR" id="B9DUB2"/>
<dbReference type="STRING" id="218495.SUB0891"/>
<dbReference type="MEROPS" id="C26.957"/>
<dbReference type="KEGG" id="sub:SUB0891"/>
<dbReference type="eggNOG" id="COG0518">
    <property type="taxonomic scope" value="Bacteria"/>
</dbReference>
<dbReference type="eggNOG" id="COG0519">
    <property type="taxonomic scope" value="Bacteria"/>
</dbReference>
<dbReference type="HOGENOM" id="CLU_014340_0_5_9"/>
<dbReference type="OrthoDB" id="9802219at2"/>
<dbReference type="UniPathway" id="UPA00189">
    <property type="reaction ID" value="UER00296"/>
</dbReference>
<dbReference type="Proteomes" id="UP000000449">
    <property type="component" value="Chromosome"/>
</dbReference>
<dbReference type="GO" id="GO:0005829">
    <property type="term" value="C:cytosol"/>
    <property type="evidence" value="ECO:0007669"/>
    <property type="project" value="TreeGrafter"/>
</dbReference>
<dbReference type="GO" id="GO:0005524">
    <property type="term" value="F:ATP binding"/>
    <property type="evidence" value="ECO:0007669"/>
    <property type="project" value="UniProtKB-UniRule"/>
</dbReference>
<dbReference type="GO" id="GO:0003921">
    <property type="term" value="F:GMP synthase activity"/>
    <property type="evidence" value="ECO:0007669"/>
    <property type="project" value="InterPro"/>
</dbReference>
<dbReference type="CDD" id="cd01742">
    <property type="entry name" value="GATase1_GMP_Synthase"/>
    <property type="match status" value="1"/>
</dbReference>
<dbReference type="CDD" id="cd01997">
    <property type="entry name" value="GMP_synthase_C"/>
    <property type="match status" value="1"/>
</dbReference>
<dbReference type="FunFam" id="3.30.300.10:FF:000002">
    <property type="entry name" value="GMP synthase [glutamine-hydrolyzing]"/>
    <property type="match status" value="1"/>
</dbReference>
<dbReference type="FunFam" id="3.40.50.620:FF:000001">
    <property type="entry name" value="GMP synthase [glutamine-hydrolyzing]"/>
    <property type="match status" value="1"/>
</dbReference>
<dbReference type="FunFam" id="3.40.50.880:FF:000001">
    <property type="entry name" value="GMP synthase [glutamine-hydrolyzing]"/>
    <property type="match status" value="1"/>
</dbReference>
<dbReference type="Gene3D" id="3.30.300.10">
    <property type="match status" value="1"/>
</dbReference>
<dbReference type="Gene3D" id="3.40.50.880">
    <property type="match status" value="1"/>
</dbReference>
<dbReference type="Gene3D" id="3.40.50.620">
    <property type="entry name" value="HUPs"/>
    <property type="match status" value="1"/>
</dbReference>
<dbReference type="HAMAP" id="MF_00344">
    <property type="entry name" value="GMP_synthase"/>
    <property type="match status" value="1"/>
</dbReference>
<dbReference type="InterPro" id="IPR029062">
    <property type="entry name" value="Class_I_gatase-like"/>
</dbReference>
<dbReference type="InterPro" id="IPR017926">
    <property type="entry name" value="GATASE"/>
</dbReference>
<dbReference type="InterPro" id="IPR001674">
    <property type="entry name" value="GMP_synth_C"/>
</dbReference>
<dbReference type="InterPro" id="IPR004739">
    <property type="entry name" value="GMP_synth_GATase"/>
</dbReference>
<dbReference type="InterPro" id="IPR022955">
    <property type="entry name" value="GMP_synthase"/>
</dbReference>
<dbReference type="InterPro" id="IPR025777">
    <property type="entry name" value="GMPS_ATP_PPase_dom"/>
</dbReference>
<dbReference type="InterPro" id="IPR022310">
    <property type="entry name" value="NAD/GMP_synthase"/>
</dbReference>
<dbReference type="InterPro" id="IPR014729">
    <property type="entry name" value="Rossmann-like_a/b/a_fold"/>
</dbReference>
<dbReference type="NCBIfam" id="TIGR00884">
    <property type="entry name" value="guaA_Cterm"/>
    <property type="match status" value="1"/>
</dbReference>
<dbReference type="NCBIfam" id="TIGR00888">
    <property type="entry name" value="guaA_Nterm"/>
    <property type="match status" value="1"/>
</dbReference>
<dbReference type="NCBIfam" id="NF000848">
    <property type="entry name" value="PRK00074.1"/>
    <property type="match status" value="1"/>
</dbReference>
<dbReference type="PANTHER" id="PTHR11922:SF2">
    <property type="entry name" value="GMP SYNTHASE [GLUTAMINE-HYDROLYZING]"/>
    <property type="match status" value="1"/>
</dbReference>
<dbReference type="PANTHER" id="PTHR11922">
    <property type="entry name" value="GMP SYNTHASE-RELATED"/>
    <property type="match status" value="1"/>
</dbReference>
<dbReference type="Pfam" id="PF00117">
    <property type="entry name" value="GATase"/>
    <property type="match status" value="1"/>
</dbReference>
<dbReference type="Pfam" id="PF00958">
    <property type="entry name" value="GMP_synt_C"/>
    <property type="match status" value="1"/>
</dbReference>
<dbReference type="Pfam" id="PF02540">
    <property type="entry name" value="NAD_synthase"/>
    <property type="match status" value="1"/>
</dbReference>
<dbReference type="PRINTS" id="PR00097">
    <property type="entry name" value="ANTSNTHASEII"/>
</dbReference>
<dbReference type="PRINTS" id="PR00099">
    <property type="entry name" value="CPSGATASE"/>
</dbReference>
<dbReference type="PRINTS" id="PR00096">
    <property type="entry name" value="GATASE"/>
</dbReference>
<dbReference type="SUPFAM" id="SSF52402">
    <property type="entry name" value="Adenine nucleotide alpha hydrolases-like"/>
    <property type="match status" value="1"/>
</dbReference>
<dbReference type="SUPFAM" id="SSF52317">
    <property type="entry name" value="Class I glutamine amidotransferase-like"/>
    <property type="match status" value="1"/>
</dbReference>
<dbReference type="SUPFAM" id="SSF54810">
    <property type="entry name" value="GMP synthetase C-terminal dimerisation domain"/>
    <property type="match status" value="1"/>
</dbReference>
<dbReference type="PROSITE" id="PS51273">
    <property type="entry name" value="GATASE_TYPE_1"/>
    <property type="match status" value="1"/>
</dbReference>
<dbReference type="PROSITE" id="PS51553">
    <property type="entry name" value="GMPS_ATP_PPASE"/>
    <property type="match status" value="1"/>
</dbReference>
<comment type="function">
    <text evidence="1">Catalyzes the synthesis of GMP from XMP.</text>
</comment>
<comment type="catalytic activity">
    <reaction evidence="1">
        <text>XMP + L-glutamine + ATP + H2O = GMP + L-glutamate + AMP + diphosphate + 2 H(+)</text>
        <dbReference type="Rhea" id="RHEA:11680"/>
        <dbReference type="ChEBI" id="CHEBI:15377"/>
        <dbReference type="ChEBI" id="CHEBI:15378"/>
        <dbReference type="ChEBI" id="CHEBI:29985"/>
        <dbReference type="ChEBI" id="CHEBI:30616"/>
        <dbReference type="ChEBI" id="CHEBI:33019"/>
        <dbReference type="ChEBI" id="CHEBI:57464"/>
        <dbReference type="ChEBI" id="CHEBI:58115"/>
        <dbReference type="ChEBI" id="CHEBI:58359"/>
        <dbReference type="ChEBI" id="CHEBI:456215"/>
        <dbReference type="EC" id="6.3.5.2"/>
    </reaction>
</comment>
<comment type="pathway">
    <text evidence="1">Purine metabolism; GMP biosynthesis; GMP from XMP (L-Gln route): step 1/1.</text>
</comment>
<comment type="subunit">
    <text evidence="1">Homodimer.</text>
</comment>
<evidence type="ECO:0000255" key="1">
    <source>
        <dbReference type="HAMAP-Rule" id="MF_00344"/>
    </source>
</evidence>